<name>TRM56_METVS</name>
<protein>
    <recommendedName>
        <fullName evidence="1">tRNA (cytidine(56)-2'-O)-methyltransferase</fullName>
        <ecNumber evidence="1">2.1.1.206</ecNumber>
    </recommendedName>
    <alternativeName>
        <fullName evidence="1">tRNA ribose 2'-O-methyltransferase aTrm56</fullName>
    </alternativeName>
</protein>
<evidence type="ECO:0000255" key="1">
    <source>
        <dbReference type="HAMAP-Rule" id="MF_00077"/>
    </source>
</evidence>
<comment type="function">
    <text evidence="1">Specifically catalyzes the AdoMet-dependent 2'-O-ribose methylation of cytidine at position 56 in tRNAs.</text>
</comment>
<comment type="catalytic activity">
    <reaction evidence="1">
        <text>cytidine(56) in tRNA + S-adenosyl-L-methionine = 2'-O-methylcytidine(56) in tRNA + S-adenosyl-L-homocysteine + H(+)</text>
        <dbReference type="Rhea" id="RHEA:42968"/>
        <dbReference type="Rhea" id="RHEA-COMP:10308"/>
        <dbReference type="Rhea" id="RHEA-COMP:10309"/>
        <dbReference type="ChEBI" id="CHEBI:15378"/>
        <dbReference type="ChEBI" id="CHEBI:57856"/>
        <dbReference type="ChEBI" id="CHEBI:59789"/>
        <dbReference type="ChEBI" id="CHEBI:74495"/>
        <dbReference type="ChEBI" id="CHEBI:82748"/>
        <dbReference type="EC" id="2.1.1.206"/>
    </reaction>
</comment>
<comment type="subunit">
    <text evidence="1">Homodimer.</text>
</comment>
<comment type="subcellular location">
    <subcellularLocation>
        <location evidence="1">Cytoplasm</location>
    </subcellularLocation>
</comment>
<comment type="similarity">
    <text evidence="1">Belongs to the aTrm56 family.</text>
</comment>
<accession>A6UQ70</accession>
<feature type="chain" id="PRO_0000365310" description="tRNA (cytidine(56)-2'-O)-methyltransferase">
    <location>
        <begin position="1"/>
        <end position="180"/>
    </location>
</feature>
<feature type="binding site" evidence="1">
    <location>
        <position position="82"/>
    </location>
    <ligand>
        <name>S-adenosyl-L-methionine</name>
        <dbReference type="ChEBI" id="CHEBI:59789"/>
    </ligand>
</feature>
<feature type="binding site" evidence="1">
    <location>
        <begin position="112"/>
        <end position="116"/>
    </location>
    <ligand>
        <name>S-adenosyl-L-methionine</name>
        <dbReference type="ChEBI" id="CHEBI:59789"/>
    </ligand>
</feature>
<feature type="binding site" evidence="1">
    <location>
        <begin position="130"/>
        <end position="137"/>
    </location>
    <ligand>
        <name>S-adenosyl-L-methionine</name>
        <dbReference type="ChEBI" id="CHEBI:59789"/>
    </ligand>
</feature>
<organism>
    <name type="scientific">Methanococcus vannielii (strain ATCC 35089 / DSM 1224 / JCM 13029 / OCM 148 / SB)</name>
    <dbReference type="NCBI Taxonomy" id="406327"/>
    <lineage>
        <taxon>Archaea</taxon>
        <taxon>Methanobacteriati</taxon>
        <taxon>Methanobacteriota</taxon>
        <taxon>Methanomada group</taxon>
        <taxon>Methanococci</taxon>
        <taxon>Methanococcales</taxon>
        <taxon>Methanococcaceae</taxon>
        <taxon>Methanococcus</taxon>
    </lineage>
</organism>
<sequence length="180" mass="20289">MHIEILRLGHRGERDKRISTHVALTSRAIGAKKILFTEEDKHVRESVERIVKSWGGEFKFEVLNSWKSYVKKFKDEGIVIHLTMYGENINNVMTDVKKELAKNSKPVLVIIGAEKVPREAYDLADYNLSVGNQPHSEVAALAIFLDRLTGGTALYSEYNDAKIAVTPSKFEKCVSVEKGK</sequence>
<proteinExistence type="inferred from homology"/>
<dbReference type="EC" id="2.1.1.206" evidence="1"/>
<dbReference type="EMBL" id="CP000742">
    <property type="protein sequence ID" value="ABR54642.1"/>
    <property type="molecule type" value="Genomic_DNA"/>
</dbReference>
<dbReference type="RefSeq" id="WP_011972544.1">
    <property type="nucleotide sequence ID" value="NC_009634.1"/>
</dbReference>
<dbReference type="SMR" id="A6UQ70"/>
<dbReference type="STRING" id="406327.Mevan_0736"/>
<dbReference type="GeneID" id="5325638"/>
<dbReference type="KEGG" id="mvn:Mevan_0736"/>
<dbReference type="eggNOG" id="arCOG01857">
    <property type="taxonomic scope" value="Archaea"/>
</dbReference>
<dbReference type="HOGENOM" id="CLU_123709_0_0_2"/>
<dbReference type="OrthoDB" id="14397at2157"/>
<dbReference type="Proteomes" id="UP000001107">
    <property type="component" value="Chromosome"/>
</dbReference>
<dbReference type="GO" id="GO:0005737">
    <property type="term" value="C:cytoplasm"/>
    <property type="evidence" value="ECO:0007669"/>
    <property type="project" value="UniProtKB-SubCell"/>
</dbReference>
<dbReference type="GO" id="GO:0106059">
    <property type="term" value="F:tRNA (cytidine(56)-2'-O)-methyltransferase activity"/>
    <property type="evidence" value="ECO:0007669"/>
    <property type="project" value="UniProtKB-EC"/>
</dbReference>
<dbReference type="GO" id="GO:0002128">
    <property type="term" value="P:tRNA nucleoside ribose methylation"/>
    <property type="evidence" value="ECO:0007669"/>
    <property type="project" value="UniProtKB-UniRule"/>
</dbReference>
<dbReference type="CDD" id="cd18083">
    <property type="entry name" value="aTrm56-like"/>
    <property type="match status" value="1"/>
</dbReference>
<dbReference type="Gene3D" id="3.40.1280.10">
    <property type="match status" value="1"/>
</dbReference>
<dbReference type="HAMAP" id="MF_00077">
    <property type="entry name" value="tRNA_methyltr_aTrm56"/>
    <property type="match status" value="1"/>
</dbReference>
<dbReference type="InterPro" id="IPR029028">
    <property type="entry name" value="Alpha/beta_knot_MTases"/>
</dbReference>
<dbReference type="InterPro" id="IPR029026">
    <property type="entry name" value="tRNA_m1G_MTases_N"/>
</dbReference>
<dbReference type="InterPro" id="IPR002845">
    <property type="entry name" value="tRNA_mtfrase_aTrm56"/>
</dbReference>
<dbReference type="NCBIfam" id="NF003048">
    <property type="entry name" value="PRK03958.1"/>
    <property type="match status" value="1"/>
</dbReference>
<dbReference type="PANTHER" id="PTHR42197">
    <property type="entry name" value="TRNA (CYTIDINE(56)-2'-O)-METHYLTRANSFERASE"/>
    <property type="match status" value="1"/>
</dbReference>
<dbReference type="PANTHER" id="PTHR42197:SF1">
    <property type="entry name" value="TRNA (CYTIDINE(56)-2'-O)-METHYLTRANSFERASE"/>
    <property type="match status" value="1"/>
</dbReference>
<dbReference type="Pfam" id="PF01994">
    <property type="entry name" value="Trm56"/>
    <property type="match status" value="1"/>
</dbReference>
<dbReference type="PIRSF" id="PIRSF016123">
    <property type="entry name" value="UCP016123"/>
    <property type="match status" value="1"/>
</dbReference>
<dbReference type="SUPFAM" id="SSF75217">
    <property type="entry name" value="alpha/beta knot"/>
    <property type="match status" value="1"/>
</dbReference>
<keyword id="KW-0963">Cytoplasm</keyword>
<keyword id="KW-0489">Methyltransferase</keyword>
<keyword id="KW-0949">S-adenosyl-L-methionine</keyword>
<keyword id="KW-0808">Transferase</keyword>
<keyword id="KW-0819">tRNA processing</keyword>
<reference key="1">
    <citation type="submission" date="2007-06" db="EMBL/GenBank/DDBJ databases">
        <title>Complete sequence of Methanococcus vannielii SB.</title>
        <authorList>
            <consortium name="US DOE Joint Genome Institute"/>
            <person name="Copeland A."/>
            <person name="Lucas S."/>
            <person name="Lapidus A."/>
            <person name="Barry K."/>
            <person name="Glavina del Rio T."/>
            <person name="Dalin E."/>
            <person name="Tice H."/>
            <person name="Pitluck S."/>
            <person name="Chain P."/>
            <person name="Malfatti S."/>
            <person name="Shin M."/>
            <person name="Vergez L."/>
            <person name="Schmutz J."/>
            <person name="Larimer F."/>
            <person name="Land M."/>
            <person name="Hauser L."/>
            <person name="Kyrpides N."/>
            <person name="Anderson I."/>
            <person name="Sieprawska-Lupa M."/>
            <person name="Whitman W.B."/>
            <person name="Richardson P."/>
        </authorList>
    </citation>
    <scope>NUCLEOTIDE SEQUENCE [LARGE SCALE GENOMIC DNA]</scope>
    <source>
        <strain>ATCC 35089 / DSM 1224 / JCM 13029 / OCM 148 / SB</strain>
    </source>
</reference>
<gene>
    <name type="ordered locus">Mevan_0736</name>
</gene>